<gene>
    <name evidence="1" type="primary">rpmA</name>
    <name type="ordered locus">JTY_2455</name>
</gene>
<accession>C1AEQ8</accession>
<keyword id="KW-0687">Ribonucleoprotein</keyword>
<keyword id="KW-0689">Ribosomal protein</keyword>
<protein>
    <recommendedName>
        <fullName evidence="1">Large ribosomal subunit protein bL27</fullName>
    </recommendedName>
    <alternativeName>
        <fullName evidence="3">50S ribosomal protein L27</fullName>
    </alternativeName>
</protein>
<sequence>MAHKKGASSSRNGRDSAAQRLGVKRYGGQVVKAGEILVRQRGTKFHPGVNVGRGGDDTLFAKTAGAVEFGIKRGRKTVSIVGSTTA</sequence>
<feature type="chain" id="PRO_1000195877" description="Large ribosomal subunit protein bL27">
    <location>
        <begin position="1"/>
        <end position="86"/>
    </location>
</feature>
<feature type="region of interest" description="Disordered" evidence="2">
    <location>
        <begin position="1"/>
        <end position="21"/>
    </location>
</feature>
<comment type="similarity">
    <text evidence="1">Belongs to the bacterial ribosomal protein bL27 family.</text>
</comment>
<name>RL27_MYCBT</name>
<evidence type="ECO:0000255" key="1">
    <source>
        <dbReference type="HAMAP-Rule" id="MF_00539"/>
    </source>
</evidence>
<evidence type="ECO:0000256" key="2">
    <source>
        <dbReference type="SAM" id="MobiDB-lite"/>
    </source>
</evidence>
<evidence type="ECO:0000305" key="3"/>
<proteinExistence type="inferred from homology"/>
<reference key="1">
    <citation type="journal article" date="2009" name="Vaccine">
        <title>Whole genome sequence analysis of Mycobacterium bovis bacillus Calmette-Guerin (BCG) Tokyo 172: a comparative study of BCG vaccine substrains.</title>
        <authorList>
            <person name="Seki M."/>
            <person name="Honda I."/>
            <person name="Fujita I."/>
            <person name="Yano I."/>
            <person name="Yamamoto S."/>
            <person name="Koyama A."/>
        </authorList>
    </citation>
    <scope>NUCLEOTIDE SEQUENCE [LARGE SCALE GENOMIC DNA]</scope>
    <source>
        <strain>BCG / Tokyo 172 / ATCC 35737 / TMC 1019</strain>
    </source>
</reference>
<organism>
    <name type="scientific">Mycobacterium bovis (strain BCG / Tokyo 172 / ATCC 35737 / TMC 1019)</name>
    <dbReference type="NCBI Taxonomy" id="561275"/>
    <lineage>
        <taxon>Bacteria</taxon>
        <taxon>Bacillati</taxon>
        <taxon>Actinomycetota</taxon>
        <taxon>Actinomycetes</taxon>
        <taxon>Mycobacteriales</taxon>
        <taxon>Mycobacteriaceae</taxon>
        <taxon>Mycobacterium</taxon>
        <taxon>Mycobacterium tuberculosis complex</taxon>
    </lineage>
</organism>
<dbReference type="EMBL" id="AP010918">
    <property type="protein sequence ID" value="BAH26737.1"/>
    <property type="molecule type" value="Genomic_DNA"/>
</dbReference>
<dbReference type="RefSeq" id="WP_003412574.1">
    <property type="nucleotide sequence ID" value="NZ_CP014566.1"/>
</dbReference>
<dbReference type="SMR" id="C1AEQ8"/>
<dbReference type="GeneID" id="45426431"/>
<dbReference type="KEGG" id="mbt:JTY_2455"/>
<dbReference type="HOGENOM" id="CLU_095424_4_0_11"/>
<dbReference type="GO" id="GO:0022625">
    <property type="term" value="C:cytosolic large ribosomal subunit"/>
    <property type="evidence" value="ECO:0007669"/>
    <property type="project" value="TreeGrafter"/>
</dbReference>
<dbReference type="GO" id="GO:0003735">
    <property type="term" value="F:structural constituent of ribosome"/>
    <property type="evidence" value="ECO:0007669"/>
    <property type="project" value="InterPro"/>
</dbReference>
<dbReference type="GO" id="GO:0006412">
    <property type="term" value="P:translation"/>
    <property type="evidence" value="ECO:0007669"/>
    <property type="project" value="UniProtKB-UniRule"/>
</dbReference>
<dbReference type="FunFam" id="2.40.50.100:FF:000020">
    <property type="entry name" value="50S ribosomal protein L27"/>
    <property type="match status" value="1"/>
</dbReference>
<dbReference type="Gene3D" id="2.40.50.100">
    <property type="match status" value="1"/>
</dbReference>
<dbReference type="HAMAP" id="MF_00539">
    <property type="entry name" value="Ribosomal_bL27"/>
    <property type="match status" value="1"/>
</dbReference>
<dbReference type="InterPro" id="IPR001684">
    <property type="entry name" value="Ribosomal_bL27"/>
</dbReference>
<dbReference type="InterPro" id="IPR018261">
    <property type="entry name" value="Ribosomal_bL27_CS"/>
</dbReference>
<dbReference type="NCBIfam" id="TIGR00062">
    <property type="entry name" value="L27"/>
    <property type="match status" value="1"/>
</dbReference>
<dbReference type="PANTHER" id="PTHR15893:SF0">
    <property type="entry name" value="LARGE RIBOSOMAL SUBUNIT PROTEIN BL27M"/>
    <property type="match status" value="1"/>
</dbReference>
<dbReference type="PANTHER" id="PTHR15893">
    <property type="entry name" value="RIBOSOMAL PROTEIN L27"/>
    <property type="match status" value="1"/>
</dbReference>
<dbReference type="Pfam" id="PF01016">
    <property type="entry name" value="Ribosomal_L27"/>
    <property type="match status" value="1"/>
</dbReference>
<dbReference type="PRINTS" id="PR00063">
    <property type="entry name" value="RIBOSOMALL27"/>
</dbReference>
<dbReference type="SUPFAM" id="SSF110324">
    <property type="entry name" value="Ribosomal L27 protein-like"/>
    <property type="match status" value="1"/>
</dbReference>
<dbReference type="PROSITE" id="PS00831">
    <property type="entry name" value="RIBOSOMAL_L27"/>
    <property type="match status" value="1"/>
</dbReference>